<evidence type="ECO:0000255" key="1">
    <source>
        <dbReference type="HAMAP-Rule" id="MF_01633"/>
    </source>
</evidence>
<gene>
    <name evidence="1" type="primary">queC</name>
    <name type="ordered locus">ELI_13935</name>
</gene>
<feature type="chain" id="PRO_0000336912" description="7-cyano-7-deazaguanine synthase">
    <location>
        <begin position="1"/>
        <end position="239"/>
    </location>
</feature>
<feature type="binding site" evidence="1">
    <location>
        <begin position="13"/>
        <end position="23"/>
    </location>
    <ligand>
        <name>ATP</name>
        <dbReference type="ChEBI" id="CHEBI:30616"/>
    </ligand>
</feature>
<feature type="binding site" evidence="1">
    <location>
        <position position="193"/>
    </location>
    <ligand>
        <name>Zn(2+)</name>
        <dbReference type="ChEBI" id="CHEBI:29105"/>
    </ligand>
</feature>
<feature type="binding site" evidence="1">
    <location>
        <position position="203"/>
    </location>
    <ligand>
        <name>Zn(2+)</name>
        <dbReference type="ChEBI" id="CHEBI:29105"/>
    </ligand>
</feature>
<feature type="binding site" evidence="1">
    <location>
        <position position="206"/>
    </location>
    <ligand>
        <name>Zn(2+)</name>
        <dbReference type="ChEBI" id="CHEBI:29105"/>
    </ligand>
</feature>
<feature type="binding site" evidence="1">
    <location>
        <position position="209"/>
    </location>
    <ligand>
        <name>Zn(2+)</name>
        <dbReference type="ChEBI" id="CHEBI:29105"/>
    </ligand>
</feature>
<comment type="function">
    <text evidence="1">Catalyzes the ATP-dependent conversion of 7-carboxy-7-deazaguanine (CDG) to 7-cyano-7-deazaguanine (preQ(0)).</text>
</comment>
<comment type="catalytic activity">
    <reaction evidence="1">
        <text>7-carboxy-7-deazaguanine + NH4(+) + ATP = 7-cyano-7-deazaguanine + ADP + phosphate + H2O + H(+)</text>
        <dbReference type="Rhea" id="RHEA:27982"/>
        <dbReference type="ChEBI" id="CHEBI:15377"/>
        <dbReference type="ChEBI" id="CHEBI:15378"/>
        <dbReference type="ChEBI" id="CHEBI:28938"/>
        <dbReference type="ChEBI" id="CHEBI:30616"/>
        <dbReference type="ChEBI" id="CHEBI:43474"/>
        <dbReference type="ChEBI" id="CHEBI:45075"/>
        <dbReference type="ChEBI" id="CHEBI:61036"/>
        <dbReference type="ChEBI" id="CHEBI:456216"/>
        <dbReference type="EC" id="6.3.4.20"/>
    </reaction>
</comment>
<comment type="cofactor">
    <cofactor evidence="1">
        <name>Zn(2+)</name>
        <dbReference type="ChEBI" id="CHEBI:29105"/>
    </cofactor>
    <text evidence="1">Binds 1 zinc ion per subunit.</text>
</comment>
<comment type="pathway">
    <text evidence="1">Purine metabolism; 7-cyano-7-deazaguanine biosynthesis.</text>
</comment>
<comment type="similarity">
    <text evidence="1">Belongs to the QueC family.</text>
</comment>
<protein>
    <recommendedName>
        <fullName evidence="1">7-cyano-7-deazaguanine synthase</fullName>
        <ecNumber evidence="1">6.3.4.20</ecNumber>
    </recommendedName>
    <alternativeName>
        <fullName evidence="1">7-cyano-7-carbaguanine synthase</fullName>
    </alternativeName>
    <alternativeName>
        <fullName evidence="1">PreQ(0) synthase</fullName>
    </alternativeName>
    <alternativeName>
        <fullName evidence="1">Queuosine biosynthesis protein QueC</fullName>
    </alternativeName>
</protein>
<organism>
    <name type="scientific">Erythrobacter litoralis (strain HTCC2594)</name>
    <dbReference type="NCBI Taxonomy" id="314225"/>
    <lineage>
        <taxon>Bacteria</taxon>
        <taxon>Pseudomonadati</taxon>
        <taxon>Pseudomonadota</taxon>
        <taxon>Alphaproteobacteria</taxon>
        <taxon>Sphingomonadales</taxon>
        <taxon>Erythrobacteraceae</taxon>
        <taxon>Erythrobacter/Porphyrobacter group</taxon>
        <taxon>Erythrobacter</taxon>
    </lineage>
</organism>
<name>QUEC_ERYLH</name>
<dbReference type="EC" id="6.3.4.20" evidence="1"/>
<dbReference type="EMBL" id="CP000157">
    <property type="protein sequence ID" value="ABC64879.1"/>
    <property type="molecule type" value="Genomic_DNA"/>
</dbReference>
<dbReference type="RefSeq" id="WP_011415701.1">
    <property type="nucleotide sequence ID" value="NC_007722.1"/>
</dbReference>
<dbReference type="SMR" id="Q2N612"/>
<dbReference type="STRING" id="314225.ELI_13935"/>
<dbReference type="KEGG" id="eli:ELI_13935"/>
<dbReference type="eggNOG" id="COG0603">
    <property type="taxonomic scope" value="Bacteria"/>
</dbReference>
<dbReference type="HOGENOM" id="CLU_081854_1_1_5"/>
<dbReference type="OrthoDB" id="9789567at2"/>
<dbReference type="UniPathway" id="UPA00391"/>
<dbReference type="Proteomes" id="UP000008808">
    <property type="component" value="Chromosome"/>
</dbReference>
<dbReference type="GO" id="GO:0005524">
    <property type="term" value="F:ATP binding"/>
    <property type="evidence" value="ECO:0007669"/>
    <property type="project" value="UniProtKB-UniRule"/>
</dbReference>
<dbReference type="GO" id="GO:0016879">
    <property type="term" value="F:ligase activity, forming carbon-nitrogen bonds"/>
    <property type="evidence" value="ECO:0007669"/>
    <property type="project" value="UniProtKB-UniRule"/>
</dbReference>
<dbReference type="GO" id="GO:0008270">
    <property type="term" value="F:zinc ion binding"/>
    <property type="evidence" value="ECO:0007669"/>
    <property type="project" value="UniProtKB-UniRule"/>
</dbReference>
<dbReference type="GO" id="GO:0008616">
    <property type="term" value="P:queuosine biosynthetic process"/>
    <property type="evidence" value="ECO:0007669"/>
    <property type="project" value="UniProtKB-UniRule"/>
</dbReference>
<dbReference type="CDD" id="cd01995">
    <property type="entry name" value="QueC-like"/>
    <property type="match status" value="1"/>
</dbReference>
<dbReference type="Gene3D" id="3.40.50.620">
    <property type="entry name" value="HUPs"/>
    <property type="match status" value="1"/>
</dbReference>
<dbReference type="HAMAP" id="MF_01633">
    <property type="entry name" value="QueC"/>
    <property type="match status" value="1"/>
</dbReference>
<dbReference type="InterPro" id="IPR018317">
    <property type="entry name" value="QueC"/>
</dbReference>
<dbReference type="InterPro" id="IPR014729">
    <property type="entry name" value="Rossmann-like_a/b/a_fold"/>
</dbReference>
<dbReference type="NCBIfam" id="TIGR00364">
    <property type="entry name" value="7-cyano-7-deazaguanine synthase QueC"/>
    <property type="match status" value="1"/>
</dbReference>
<dbReference type="PANTHER" id="PTHR42914">
    <property type="entry name" value="7-CYANO-7-DEAZAGUANINE SYNTHASE"/>
    <property type="match status" value="1"/>
</dbReference>
<dbReference type="PANTHER" id="PTHR42914:SF1">
    <property type="entry name" value="7-CYANO-7-DEAZAGUANINE SYNTHASE"/>
    <property type="match status" value="1"/>
</dbReference>
<dbReference type="Pfam" id="PF06508">
    <property type="entry name" value="QueC"/>
    <property type="match status" value="1"/>
</dbReference>
<dbReference type="PIRSF" id="PIRSF006293">
    <property type="entry name" value="ExsB"/>
    <property type="match status" value="1"/>
</dbReference>
<dbReference type="SUPFAM" id="SSF52402">
    <property type="entry name" value="Adenine nucleotide alpha hydrolases-like"/>
    <property type="match status" value="1"/>
</dbReference>
<sequence length="239" mass="25290">MAANSRKAAAILLSGGLDSMVTAAIAQEQGYAVHALTIDYGQRHKVELQSARLIAAKIGAERHVEIEADLRALGGSALTDDIDVPKCGVGNDIPVTYVPARNLVFLSLTTAFAEASGARDIFIGVNALDYSGYPDCRPEFIESFAVTANLATKAGVEESAPFKIHAPLQHMTKADIARECARLGLESAWSWSCYDPLPGLKPCGACDSCRLRRKGFAEAGLADGLDYPADAPPIQGENA</sequence>
<accession>Q2N612</accession>
<proteinExistence type="inferred from homology"/>
<reference key="1">
    <citation type="journal article" date="2009" name="J. Bacteriol.">
        <title>Complete genome sequence of Erythrobacter litoralis HTCC2594.</title>
        <authorList>
            <person name="Oh H.M."/>
            <person name="Giovannoni S.J."/>
            <person name="Ferriera S."/>
            <person name="Johnson J."/>
            <person name="Cho J.C."/>
        </authorList>
    </citation>
    <scope>NUCLEOTIDE SEQUENCE [LARGE SCALE GENOMIC DNA]</scope>
    <source>
        <strain>HTCC2594</strain>
    </source>
</reference>
<keyword id="KW-0067">ATP-binding</keyword>
<keyword id="KW-0436">Ligase</keyword>
<keyword id="KW-0479">Metal-binding</keyword>
<keyword id="KW-0547">Nucleotide-binding</keyword>
<keyword id="KW-0671">Queuosine biosynthesis</keyword>
<keyword id="KW-1185">Reference proteome</keyword>
<keyword id="KW-0862">Zinc</keyword>